<dbReference type="EMBL" id="AE000511">
    <property type="protein sequence ID" value="AAD07108.1"/>
    <property type="molecule type" value="Genomic_DNA"/>
</dbReference>
<dbReference type="PIR" id="G64523">
    <property type="entry name" value="G64523"/>
</dbReference>
<dbReference type="RefSeq" id="NP_206833.1">
    <property type="nucleotide sequence ID" value="NC_000915.1"/>
</dbReference>
<dbReference type="RefSeq" id="WP_001023005.1">
    <property type="nucleotide sequence ID" value="NC_018939.1"/>
</dbReference>
<dbReference type="SMR" id="P64649"/>
<dbReference type="IntAct" id="P64649">
    <property type="interactions" value="6"/>
</dbReference>
<dbReference type="MINT" id="P64649"/>
<dbReference type="STRING" id="85962.HP_0031"/>
<dbReference type="PaxDb" id="85962-C694_00145"/>
<dbReference type="EnsemblBacteria" id="AAD07108">
    <property type="protein sequence ID" value="AAD07108"/>
    <property type="gene ID" value="HP_0031"/>
</dbReference>
<dbReference type="KEGG" id="heo:C694_00145"/>
<dbReference type="KEGG" id="hpy:HP_0031"/>
<dbReference type="PATRIC" id="fig|85962.47.peg.32"/>
<dbReference type="eggNOG" id="COG0589">
    <property type="taxonomic scope" value="Bacteria"/>
</dbReference>
<dbReference type="InParanoid" id="P64649"/>
<dbReference type="OrthoDB" id="5327751at2"/>
<dbReference type="Proteomes" id="UP000000429">
    <property type="component" value="Chromosome"/>
</dbReference>
<dbReference type="CDD" id="cd00293">
    <property type="entry name" value="USP-like"/>
    <property type="match status" value="1"/>
</dbReference>
<dbReference type="Gene3D" id="3.40.50.620">
    <property type="entry name" value="HUPs"/>
    <property type="match status" value="1"/>
</dbReference>
<dbReference type="InterPro" id="IPR014729">
    <property type="entry name" value="Rossmann-like_a/b/a_fold"/>
</dbReference>
<dbReference type="InterPro" id="IPR006016">
    <property type="entry name" value="UspA"/>
</dbReference>
<dbReference type="PANTHER" id="PTHR46268">
    <property type="entry name" value="STRESS RESPONSE PROTEIN NHAX"/>
    <property type="match status" value="1"/>
</dbReference>
<dbReference type="PANTHER" id="PTHR46268:SF15">
    <property type="entry name" value="UNIVERSAL STRESS PROTEIN HP_0031"/>
    <property type="match status" value="1"/>
</dbReference>
<dbReference type="Pfam" id="PF00582">
    <property type="entry name" value="Usp"/>
    <property type="match status" value="1"/>
</dbReference>
<dbReference type="SUPFAM" id="SSF52402">
    <property type="entry name" value="Adenine nucleotide alpha hydrolases-like"/>
    <property type="match status" value="1"/>
</dbReference>
<keyword id="KW-1185">Reference proteome</keyword>
<evidence type="ECO:0000305" key="1"/>
<comment type="similarity">
    <text evidence="1">Belongs to the universal stress protein A family.</text>
</comment>
<gene>
    <name type="ordered locus">HP_0031</name>
</gene>
<accession>P64649</accession>
<accession>O24874</accession>
<sequence>MNILFGISDTQECYNAIKFAVKLAHSLKEVRFTLLHVSMEVFIYSESGMMDYGQTEALEEEKAKALLKQFEDAFKKENIECESVLKSGDLIDVVLDMAKDYDLLLIGASESNLLYRLFISHQNSLVEQSSIPVVIAK</sequence>
<reference key="1">
    <citation type="journal article" date="1997" name="Nature">
        <title>The complete genome sequence of the gastric pathogen Helicobacter pylori.</title>
        <authorList>
            <person name="Tomb J.-F."/>
            <person name="White O."/>
            <person name="Kerlavage A.R."/>
            <person name="Clayton R.A."/>
            <person name="Sutton G.G."/>
            <person name="Fleischmann R.D."/>
            <person name="Ketchum K.A."/>
            <person name="Klenk H.-P."/>
            <person name="Gill S.R."/>
            <person name="Dougherty B.A."/>
            <person name="Nelson K.E."/>
            <person name="Quackenbush J."/>
            <person name="Zhou L."/>
            <person name="Kirkness E.F."/>
            <person name="Peterson S.N."/>
            <person name="Loftus B.J."/>
            <person name="Richardson D.L."/>
            <person name="Dodson R.J."/>
            <person name="Khalak H.G."/>
            <person name="Glodek A."/>
            <person name="McKenney K."/>
            <person name="FitzGerald L.M."/>
            <person name="Lee N."/>
            <person name="Adams M.D."/>
            <person name="Hickey E.K."/>
            <person name="Berg D.E."/>
            <person name="Gocayne J.D."/>
            <person name="Utterback T.R."/>
            <person name="Peterson J.D."/>
            <person name="Kelley J.M."/>
            <person name="Cotton M.D."/>
            <person name="Weidman J.F."/>
            <person name="Fujii C."/>
            <person name="Bowman C."/>
            <person name="Watthey L."/>
            <person name="Wallin E."/>
            <person name="Hayes W.S."/>
            <person name="Borodovsky M."/>
            <person name="Karp P.D."/>
            <person name="Smith H.O."/>
            <person name="Fraser C.M."/>
            <person name="Venter J.C."/>
        </authorList>
    </citation>
    <scope>NUCLEOTIDE SEQUENCE [LARGE SCALE GENOMIC DNA]</scope>
    <source>
        <strain>ATCC 700392 / 26695</strain>
    </source>
</reference>
<name>Y031_HELPY</name>
<proteinExistence type="inferred from homology"/>
<feature type="chain" id="PRO_0000128673" description="Universal stress protein HP_0031">
    <location>
        <begin position="1"/>
        <end position="137"/>
    </location>
</feature>
<organism>
    <name type="scientific">Helicobacter pylori (strain ATCC 700392 / 26695)</name>
    <name type="common">Campylobacter pylori</name>
    <dbReference type="NCBI Taxonomy" id="85962"/>
    <lineage>
        <taxon>Bacteria</taxon>
        <taxon>Pseudomonadati</taxon>
        <taxon>Campylobacterota</taxon>
        <taxon>Epsilonproteobacteria</taxon>
        <taxon>Campylobacterales</taxon>
        <taxon>Helicobacteraceae</taxon>
        <taxon>Helicobacter</taxon>
    </lineage>
</organism>
<protein>
    <recommendedName>
        <fullName>Universal stress protein HP_0031</fullName>
        <shortName>USP HP_0031</shortName>
    </recommendedName>
</protein>